<protein>
    <recommendedName>
        <fullName evidence="1">2-C-methyl-D-erythritol 2,4-cyclodiphosphate synthase</fullName>
        <shortName evidence="1">MECDP-synthase</shortName>
        <shortName evidence="1">MECPP-synthase</shortName>
        <shortName evidence="1">MECPS</shortName>
        <ecNumber evidence="1">4.6.1.12</ecNumber>
    </recommendedName>
</protein>
<dbReference type="EC" id="4.6.1.12" evidence="1"/>
<dbReference type="EMBL" id="CP000961">
    <property type="protein sequence ID" value="ACA87616.1"/>
    <property type="molecule type" value="Genomic_DNA"/>
</dbReference>
<dbReference type="RefSeq" id="WP_012325951.1">
    <property type="nucleotide sequence ID" value="NC_010506.1"/>
</dbReference>
<dbReference type="SMR" id="B1KPT3"/>
<dbReference type="STRING" id="392500.Swoo_3347"/>
<dbReference type="KEGG" id="swd:Swoo_3347"/>
<dbReference type="eggNOG" id="COG0245">
    <property type="taxonomic scope" value="Bacteria"/>
</dbReference>
<dbReference type="HOGENOM" id="CLU_084630_2_0_6"/>
<dbReference type="UniPathway" id="UPA00056">
    <property type="reaction ID" value="UER00095"/>
</dbReference>
<dbReference type="Proteomes" id="UP000002168">
    <property type="component" value="Chromosome"/>
</dbReference>
<dbReference type="GO" id="GO:0008685">
    <property type="term" value="F:2-C-methyl-D-erythritol 2,4-cyclodiphosphate synthase activity"/>
    <property type="evidence" value="ECO:0007669"/>
    <property type="project" value="UniProtKB-UniRule"/>
</dbReference>
<dbReference type="GO" id="GO:0046872">
    <property type="term" value="F:metal ion binding"/>
    <property type="evidence" value="ECO:0007669"/>
    <property type="project" value="UniProtKB-KW"/>
</dbReference>
<dbReference type="GO" id="GO:0019288">
    <property type="term" value="P:isopentenyl diphosphate biosynthetic process, methylerythritol 4-phosphate pathway"/>
    <property type="evidence" value="ECO:0007669"/>
    <property type="project" value="UniProtKB-UniRule"/>
</dbReference>
<dbReference type="GO" id="GO:0016114">
    <property type="term" value="P:terpenoid biosynthetic process"/>
    <property type="evidence" value="ECO:0007669"/>
    <property type="project" value="InterPro"/>
</dbReference>
<dbReference type="CDD" id="cd00554">
    <property type="entry name" value="MECDP_synthase"/>
    <property type="match status" value="1"/>
</dbReference>
<dbReference type="FunFam" id="3.30.1330.50:FF:000001">
    <property type="entry name" value="2-C-methyl-D-erythritol 2,4-cyclodiphosphate synthase"/>
    <property type="match status" value="1"/>
</dbReference>
<dbReference type="Gene3D" id="3.30.1330.50">
    <property type="entry name" value="2-C-methyl-D-erythritol 2,4-cyclodiphosphate synthase"/>
    <property type="match status" value="1"/>
</dbReference>
<dbReference type="HAMAP" id="MF_00107">
    <property type="entry name" value="IspF"/>
    <property type="match status" value="1"/>
</dbReference>
<dbReference type="InterPro" id="IPR003526">
    <property type="entry name" value="MECDP_synthase"/>
</dbReference>
<dbReference type="InterPro" id="IPR020555">
    <property type="entry name" value="MECDP_synthase_CS"/>
</dbReference>
<dbReference type="InterPro" id="IPR036571">
    <property type="entry name" value="MECDP_synthase_sf"/>
</dbReference>
<dbReference type="NCBIfam" id="TIGR00151">
    <property type="entry name" value="ispF"/>
    <property type="match status" value="1"/>
</dbReference>
<dbReference type="PANTHER" id="PTHR43181">
    <property type="entry name" value="2-C-METHYL-D-ERYTHRITOL 2,4-CYCLODIPHOSPHATE SYNTHASE, CHLOROPLASTIC"/>
    <property type="match status" value="1"/>
</dbReference>
<dbReference type="PANTHER" id="PTHR43181:SF1">
    <property type="entry name" value="2-C-METHYL-D-ERYTHRITOL 2,4-CYCLODIPHOSPHATE SYNTHASE, CHLOROPLASTIC"/>
    <property type="match status" value="1"/>
</dbReference>
<dbReference type="Pfam" id="PF02542">
    <property type="entry name" value="YgbB"/>
    <property type="match status" value="1"/>
</dbReference>
<dbReference type="SUPFAM" id="SSF69765">
    <property type="entry name" value="IpsF-like"/>
    <property type="match status" value="1"/>
</dbReference>
<dbReference type="PROSITE" id="PS01350">
    <property type="entry name" value="ISPF"/>
    <property type="match status" value="1"/>
</dbReference>
<feature type="chain" id="PRO_1000094291" description="2-C-methyl-D-erythritol 2,4-cyclodiphosphate synthase">
    <location>
        <begin position="1"/>
        <end position="159"/>
    </location>
</feature>
<feature type="binding site" evidence="1">
    <location>
        <begin position="10"/>
        <end position="12"/>
    </location>
    <ligand>
        <name>4-CDP-2-C-methyl-D-erythritol 2-phosphate</name>
        <dbReference type="ChEBI" id="CHEBI:57919"/>
    </ligand>
</feature>
<feature type="binding site" evidence="1">
    <location>
        <position position="10"/>
    </location>
    <ligand>
        <name>a divalent metal cation</name>
        <dbReference type="ChEBI" id="CHEBI:60240"/>
    </ligand>
</feature>
<feature type="binding site" evidence="1">
    <location>
        <position position="12"/>
    </location>
    <ligand>
        <name>a divalent metal cation</name>
        <dbReference type="ChEBI" id="CHEBI:60240"/>
    </ligand>
</feature>
<feature type="binding site" evidence="1">
    <location>
        <begin position="36"/>
        <end position="37"/>
    </location>
    <ligand>
        <name>4-CDP-2-C-methyl-D-erythritol 2-phosphate</name>
        <dbReference type="ChEBI" id="CHEBI:57919"/>
    </ligand>
</feature>
<feature type="binding site" evidence="1">
    <location>
        <position position="44"/>
    </location>
    <ligand>
        <name>a divalent metal cation</name>
        <dbReference type="ChEBI" id="CHEBI:60240"/>
    </ligand>
</feature>
<feature type="binding site" evidence="1">
    <location>
        <begin position="58"/>
        <end position="60"/>
    </location>
    <ligand>
        <name>4-CDP-2-C-methyl-D-erythritol 2-phosphate</name>
        <dbReference type="ChEBI" id="CHEBI:57919"/>
    </ligand>
</feature>
<feature type="binding site" evidence="1">
    <location>
        <begin position="63"/>
        <end position="67"/>
    </location>
    <ligand>
        <name>4-CDP-2-C-methyl-D-erythritol 2-phosphate</name>
        <dbReference type="ChEBI" id="CHEBI:57919"/>
    </ligand>
</feature>
<feature type="binding site" evidence="1">
    <location>
        <begin position="102"/>
        <end position="108"/>
    </location>
    <ligand>
        <name>4-CDP-2-C-methyl-D-erythritol 2-phosphate</name>
        <dbReference type="ChEBI" id="CHEBI:57919"/>
    </ligand>
</feature>
<feature type="binding site" evidence="1">
    <location>
        <begin position="134"/>
        <end position="137"/>
    </location>
    <ligand>
        <name>4-CDP-2-C-methyl-D-erythritol 2-phosphate</name>
        <dbReference type="ChEBI" id="CHEBI:57919"/>
    </ligand>
</feature>
<feature type="binding site" evidence="1">
    <location>
        <position position="141"/>
    </location>
    <ligand>
        <name>4-CDP-2-C-methyl-D-erythritol 2-phosphate</name>
        <dbReference type="ChEBI" id="CHEBI:57919"/>
    </ligand>
</feature>
<feature type="binding site" evidence="1">
    <location>
        <position position="144"/>
    </location>
    <ligand>
        <name>4-CDP-2-C-methyl-D-erythritol 2-phosphate</name>
        <dbReference type="ChEBI" id="CHEBI:57919"/>
    </ligand>
</feature>
<feature type="site" description="Transition state stabilizer" evidence="1">
    <location>
        <position position="36"/>
    </location>
</feature>
<feature type="site" description="Transition state stabilizer" evidence="1">
    <location>
        <position position="135"/>
    </location>
</feature>
<proteinExistence type="inferred from homology"/>
<organism>
    <name type="scientific">Shewanella woodyi (strain ATCC 51908 / MS32)</name>
    <dbReference type="NCBI Taxonomy" id="392500"/>
    <lineage>
        <taxon>Bacteria</taxon>
        <taxon>Pseudomonadati</taxon>
        <taxon>Pseudomonadota</taxon>
        <taxon>Gammaproteobacteria</taxon>
        <taxon>Alteromonadales</taxon>
        <taxon>Shewanellaceae</taxon>
        <taxon>Shewanella</taxon>
    </lineage>
</organism>
<name>ISPF_SHEWM</name>
<sequence>MNIRIGHGFDVHKFGGDSPLLLGGVNVPYETGLIAHSDGDVVLHAISDAVLGAVALGDIGKHFPDTDDDFKGADSRHLLRHCYQLAKDKGFVIGNLDVTIIAQVPKMAPHIQAIREVLSRDFATDLDNINVKATTTEKLGFTGRKEGIAVEAVILLAKA</sequence>
<reference key="1">
    <citation type="submission" date="2008-02" db="EMBL/GenBank/DDBJ databases">
        <title>Complete sequence of Shewanella woodyi ATCC 51908.</title>
        <authorList>
            <consortium name="US DOE Joint Genome Institute"/>
            <person name="Copeland A."/>
            <person name="Lucas S."/>
            <person name="Lapidus A."/>
            <person name="Glavina del Rio T."/>
            <person name="Dalin E."/>
            <person name="Tice H."/>
            <person name="Bruce D."/>
            <person name="Goodwin L."/>
            <person name="Pitluck S."/>
            <person name="Sims D."/>
            <person name="Brettin T."/>
            <person name="Detter J.C."/>
            <person name="Han C."/>
            <person name="Kuske C.R."/>
            <person name="Schmutz J."/>
            <person name="Larimer F."/>
            <person name="Land M."/>
            <person name="Hauser L."/>
            <person name="Kyrpides N."/>
            <person name="Lykidis A."/>
            <person name="Zhao J.-S."/>
            <person name="Richardson P."/>
        </authorList>
    </citation>
    <scope>NUCLEOTIDE SEQUENCE [LARGE SCALE GENOMIC DNA]</scope>
    <source>
        <strain>ATCC 51908 / MS32</strain>
    </source>
</reference>
<comment type="function">
    <text evidence="1">Involved in the biosynthesis of isopentenyl diphosphate (IPP) and dimethylallyl diphosphate (DMAPP), two major building blocks of isoprenoid compounds. Catalyzes the conversion of 4-diphosphocytidyl-2-C-methyl-D-erythritol 2-phosphate (CDP-ME2P) to 2-C-methyl-D-erythritol 2,4-cyclodiphosphate (ME-CPP) with a corresponding release of cytidine 5-monophosphate (CMP).</text>
</comment>
<comment type="catalytic activity">
    <reaction evidence="1">
        <text>4-CDP-2-C-methyl-D-erythritol 2-phosphate = 2-C-methyl-D-erythritol 2,4-cyclic diphosphate + CMP</text>
        <dbReference type="Rhea" id="RHEA:23864"/>
        <dbReference type="ChEBI" id="CHEBI:57919"/>
        <dbReference type="ChEBI" id="CHEBI:58483"/>
        <dbReference type="ChEBI" id="CHEBI:60377"/>
        <dbReference type="EC" id="4.6.1.12"/>
    </reaction>
</comment>
<comment type="cofactor">
    <cofactor evidence="1">
        <name>a divalent metal cation</name>
        <dbReference type="ChEBI" id="CHEBI:60240"/>
    </cofactor>
    <text evidence="1">Binds 1 divalent metal cation per subunit.</text>
</comment>
<comment type="pathway">
    <text evidence="1">Isoprenoid biosynthesis; isopentenyl diphosphate biosynthesis via DXP pathway; isopentenyl diphosphate from 1-deoxy-D-xylulose 5-phosphate: step 4/6.</text>
</comment>
<comment type="subunit">
    <text evidence="1">Homotrimer.</text>
</comment>
<comment type="similarity">
    <text evidence="1">Belongs to the IspF family.</text>
</comment>
<evidence type="ECO:0000255" key="1">
    <source>
        <dbReference type="HAMAP-Rule" id="MF_00107"/>
    </source>
</evidence>
<keyword id="KW-0414">Isoprene biosynthesis</keyword>
<keyword id="KW-0456">Lyase</keyword>
<keyword id="KW-0479">Metal-binding</keyword>
<keyword id="KW-1185">Reference proteome</keyword>
<gene>
    <name evidence="1" type="primary">ispF</name>
    <name type="ordered locus">Swoo_3347</name>
</gene>
<accession>B1KPT3</accession>